<feature type="chain" id="PRO_1000166369" description="Large ribosomal subunit protein uL16">
    <location>
        <begin position="1"/>
        <end position="138"/>
    </location>
</feature>
<feature type="region of interest" description="Disordered" evidence="2">
    <location>
        <begin position="1"/>
        <end position="22"/>
    </location>
</feature>
<feature type="compositionally biased region" description="Basic residues" evidence="2">
    <location>
        <begin position="1"/>
        <end position="17"/>
    </location>
</feature>
<keyword id="KW-0687">Ribonucleoprotein</keyword>
<keyword id="KW-0689">Ribosomal protein</keyword>
<keyword id="KW-0694">RNA-binding</keyword>
<keyword id="KW-0699">rRNA-binding</keyword>
<keyword id="KW-0820">tRNA-binding</keyword>
<comment type="function">
    <text evidence="1">Binds 23S rRNA and is also seen to make contacts with the A and possibly P site tRNAs.</text>
</comment>
<comment type="subunit">
    <text evidence="1">Part of the 50S ribosomal subunit.</text>
</comment>
<comment type="similarity">
    <text evidence="1">Belongs to the universal ribosomal protein uL16 family.</text>
</comment>
<reference key="1">
    <citation type="journal article" date="2009" name="Vaccine">
        <title>Whole genome sequence analysis of Mycobacterium bovis bacillus Calmette-Guerin (BCG) Tokyo 172: a comparative study of BCG vaccine substrains.</title>
        <authorList>
            <person name="Seki M."/>
            <person name="Honda I."/>
            <person name="Fujita I."/>
            <person name="Yano I."/>
            <person name="Yamamoto S."/>
            <person name="Koyama A."/>
        </authorList>
    </citation>
    <scope>NUCLEOTIDE SEQUENCE [LARGE SCALE GENOMIC DNA]</scope>
    <source>
        <strain>BCG / Tokyo 172 / ATCC 35737 / TMC 1019</strain>
    </source>
</reference>
<sequence>MLIPRKVKHRKQHHPRQRGIASGGTTVNFGDYGIQALEHAYVTNRQIESARIAINRHIKRGGKVWINIFPDRPLTKKPAETRMGSGKGSPEWWVANVKPGRVLFELSYPNEGVARAALTRAIHKLPIKARIITREEQF</sequence>
<evidence type="ECO:0000255" key="1">
    <source>
        <dbReference type="HAMAP-Rule" id="MF_01342"/>
    </source>
</evidence>
<evidence type="ECO:0000256" key="2">
    <source>
        <dbReference type="SAM" id="MobiDB-lite"/>
    </source>
</evidence>
<evidence type="ECO:0000305" key="3"/>
<accession>C1AL42</accession>
<gene>
    <name evidence="1" type="primary">rplP</name>
    <name type="ordered locus">JTY_0728</name>
</gene>
<organism>
    <name type="scientific">Mycobacterium bovis (strain BCG / Tokyo 172 / ATCC 35737 / TMC 1019)</name>
    <dbReference type="NCBI Taxonomy" id="561275"/>
    <lineage>
        <taxon>Bacteria</taxon>
        <taxon>Bacillati</taxon>
        <taxon>Actinomycetota</taxon>
        <taxon>Actinomycetes</taxon>
        <taxon>Mycobacteriales</taxon>
        <taxon>Mycobacteriaceae</taxon>
        <taxon>Mycobacterium</taxon>
        <taxon>Mycobacterium tuberculosis complex</taxon>
    </lineage>
</organism>
<proteinExistence type="inferred from homology"/>
<name>RL16_MYCBT</name>
<dbReference type="EMBL" id="AP010918">
    <property type="protein sequence ID" value="BAH25021.1"/>
    <property type="molecule type" value="Genomic_DNA"/>
</dbReference>
<dbReference type="RefSeq" id="WP_003403592.1">
    <property type="nucleotide sequence ID" value="NZ_CP014566.1"/>
</dbReference>
<dbReference type="SMR" id="C1AL42"/>
<dbReference type="KEGG" id="mbt:JTY_0728"/>
<dbReference type="HOGENOM" id="CLU_078858_2_1_11"/>
<dbReference type="GO" id="GO:0022625">
    <property type="term" value="C:cytosolic large ribosomal subunit"/>
    <property type="evidence" value="ECO:0007669"/>
    <property type="project" value="TreeGrafter"/>
</dbReference>
<dbReference type="GO" id="GO:0019843">
    <property type="term" value="F:rRNA binding"/>
    <property type="evidence" value="ECO:0007669"/>
    <property type="project" value="UniProtKB-UniRule"/>
</dbReference>
<dbReference type="GO" id="GO:0003735">
    <property type="term" value="F:structural constituent of ribosome"/>
    <property type="evidence" value="ECO:0007669"/>
    <property type="project" value="InterPro"/>
</dbReference>
<dbReference type="GO" id="GO:0000049">
    <property type="term" value="F:tRNA binding"/>
    <property type="evidence" value="ECO:0007669"/>
    <property type="project" value="UniProtKB-KW"/>
</dbReference>
<dbReference type="GO" id="GO:0006412">
    <property type="term" value="P:translation"/>
    <property type="evidence" value="ECO:0007669"/>
    <property type="project" value="UniProtKB-UniRule"/>
</dbReference>
<dbReference type="CDD" id="cd01433">
    <property type="entry name" value="Ribosomal_L16_L10e"/>
    <property type="match status" value="1"/>
</dbReference>
<dbReference type="FunFam" id="3.90.1170.10:FF:000001">
    <property type="entry name" value="50S ribosomal protein L16"/>
    <property type="match status" value="1"/>
</dbReference>
<dbReference type="Gene3D" id="3.90.1170.10">
    <property type="entry name" value="Ribosomal protein L10e/L16"/>
    <property type="match status" value="1"/>
</dbReference>
<dbReference type="HAMAP" id="MF_01342">
    <property type="entry name" value="Ribosomal_uL16"/>
    <property type="match status" value="1"/>
</dbReference>
<dbReference type="InterPro" id="IPR047873">
    <property type="entry name" value="Ribosomal_uL16"/>
</dbReference>
<dbReference type="InterPro" id="IPR000114">
    <property type="entry name" value="Ribosomal_uL16_bact-type"/>
</dbReference>
<dbReference type="InterPro" id="IPR020798">
    <property type="entry name" value="Ribosomal_uL16_CS"/>
</dbReference>
<dbReference type="InterPro" id="IPR016180">
    <property type="entry name" value="Ribosomal_uL16_dom"/>
</dbReference>
<dbReference type="InterPro" id="IPR036920">
    <property type="entry name" value="Ribosomal_uL16_sf"/>
</dbReference>
<dbReference type="NCBIfam" id="TIGR01164">
    <property type="entry name" value="rplP_bact"/>
    <property type="match status" value="1"/>
</dbReference>
<dbReference type="PANTHER" id="PTHR12220">
    <property type="entry name" value="50S/60S RIBOSOMAL PROTEIN L16"/>
    <property type="match status" value="1"/>
</dbReference>
<dbReference type="PANTHER" id="PTHR12220:SF13">
    <property type="entry name" value="LARGE RIBOSOMAL SUBUNIT PROTEIN UL16M"/>
    <property type="match status" value="1"/>
</dbReference>
<dbReference type="Pfam" id="PF00252">
    <property type="entry name" value="Ribosomal_L16"/>
    <property type="match status" value="1"/>
</dbReference>
<dbReference type="PRINTS" id="PR00060">
    <property type="entry name" value="RIBOSOMALL16"/>
</dbReference>
<dbReference type="SUPFAM" id="SSF54686">
    <property type="entry name" value="Ribosomal protein L16p/L10e"/>
    <property type="match status" value="1"/>
</dbReference>
<dbReference type="PROSITE" id="PS00586">
    <property type="entry name" value="RIBOSOMAL_L16_1"/>
    <property type="match status" value="1"/>
</dbReference>
<dbReference type="PROSITE" id="PS00701">
    <property type="entry name" value="RIBOSOMAL_L16_2"/>
    <property type="match status" value="1"/>
</dbReference>
<protein>
    <recommendedName>
        <fullName evidence="1">Large ribosomal subunit protein uL16</fullName>
    </recommendedName>
    <alternativeName>
        <fullName evidence="3">50S ribosomal protein L16</fullName>
    </alternativeName>
</protein>